<keyword id="KW-0004">4Fe-4S</keyword>
<keyword id="KW-0963">Cytoplasm</keyword>
<keyword id="KW-0408">Iron</keyword>
<keyword id="KW-0411">Iron-sulfur</keyword>
<keyword id="KW-0479">Metal-binding</keyword>
<keyword id="KW-0949">S-adenosyl-L-methionine</keyword>
<keyword id="KW-0808">Transferase</keyword>
<organism>
    <name type="scientific">Halobacterium salinarum (strain ATCC 29341 / DSM 671 / R1)</name>
    <dbReference type="NCBI Taxonomy" id="478009"/>
    <lineage>
        <taxon>Archaea</taxon>
        <taxon>Methanobacteriati</taxon>
        <taxon>Methanobacteriota</taxon>
        <taxon>Stenosarchaea group</taxon>
        <taxon>Halobacteria</taxon>
        <taxon>Halobacteriales</taxon>
        <taxon>Halobacteriaceae</taxon>
        <taxon>Halobacterium</taxon>
        <taxon>Halobacterium salinarum NRC-34001</taxon>
    </lineage>
</organism>
<name>LIPA_HALS3</name>
<feature type="chain" id="PRO_1000099607" description="Lipoyl synthase">
    <location>
        <begin position="1"/>
        <end position="311"/>
    </location>
</feature>
<feature type="domain" description="Radical SAM core" evidence="2">
    <location>
        <begin position="51"/>
        <end position="269"/>
    </location>
</feature>
<feature type="binding site" evidence="1">
    <location>
        <position position="36"/>
    </location>
    <ligand>
        <name>[4Fe-4S] cluster</name>
        <dbReference type="ChEBI" id="CHEBI:49883"/>
        <label>1</label>
    </ligand>
</feature>
<feature type="binding site" evidence="1">
    <location>
        <position position="41"/>
    </location>
    <ligand>
        <name>[4Fe-4S] cluster</name>
        <dbReference type="ChEBI" id="CHEBI:49883"/>
        <label>1</label>
    </ligand>
</feature>
<feature type="binding site" evidence="1">
    <location>
        <position position="47"/>
    </location>
    <ligand>
        <name>[4Fe-4S] cluster</name>
        <dbReference type="ChEBI" id="CHEBI:49883"/>
        <label>1</label>
    </ligand>
</feature>
<feature type="binding site" evidence="1">
    <location>
        <position position="66"/>
    </location>
    <ligand>
        <name>[4Fe-4S] cluster</name>
        <dbReference type="ChEBI" id="CHEBI:49883"/>
        <label>2</label>
        <note>4Fe-4S-S-AdoMet</note>
    </ligand>
</feature>
<feature type="binding site" evidence="1">
    <location>
        <position position="70"/>
    </location>
    <ligand>
        <name>[4Fe-4S] cluster</name>
        <dbReference type="ChEBI" id="CHEBI:49883"/>
        <label>2</label>
        <note>4Fe-4S-S-AdoMet</note>
    </ligand>
</feature>
<feature type="binding site" evidence="1">
    <location>
        <position position="73"/>
    </location>
    <ligand>
        <name>[4Fe-4S] cluster</name>
        <dbReference type="ChEBI" id="CHEBI:49883"/>
        <label>2</label>
        <note>4Fe-4S-S-AdoMet</note>
    </ligand>
</feature>
<feature type="binding site" evidence="1">
    <location>
        <position position="280"/>
    </location>
    <ligand>
        <name>[4Fe-4S] cluster</name>
        <dbReference type="ChEBI" id="CHEBI:49883"/>
        <label>1</label>
    </ligand>
</feature>
<gene>
    <name evidence="1" type="primary">lipA</name>
    <name type="ordered locus">OE_4111F</name>
</gene>
<evidence type="ECO:0000255" key="1">
    <source>
        <dbReference type="HAMAP-Rule" id="MF_00206"/>
    </source>
</evidence>
<evidence type="ECO:0000255" key="2">
    <source>
        <dbReference type="PROSITE-ProRule" id="PRU01266"/>
    </source>
</evidence>
<dbReference type="EC" id="2.8.1.8" evidence="1"/>
<dbReference type="EMBL" id="AM774415">
    <property type="protein sequence ID" value="CAP14643.1"/>
    <property type="molecule type" value="Genomic_DNA"/>
</dbReference>
<dbReference type="RefSeq" id="WP_010903644.1">
    <property type="nucleotide sequence ID" value="NC_010364.1"/>
</dbReference>
<dbReference type="SMR" id="B0R7C4"/>
<dbReference type="EnsemblBacteria" id="CAP14643">
    <property type="protein sequence ID" value="CAP14643"/>
    <property type="gene ID" value="OE_4111F"/>
</dbReference>
<dbReference type="GeneID" id="89350365"/>
<dbReference type="KEGG" id="hsl:OE_4111F"/>
<dbReference type="HOGENOM" id="CLU_033144_2_0_2"/>
<dbReference type="PhylomeDB" id="B0R7C4"/>
<dbReference type="UniPathway" id="UPA00538">
    <property type="reaction ID" value="UER00593"/>
</dbReference>
<dbReference type="Proteomes" id="UP000001321">
    <property type="component" value="Chromosome"/>
</dbReference>
<dbReference type="GO" id="GO:0005737">
    <property type="term" value="C:cytoplasm"/>
    <property type="evidence" value="ECO:0007669"/>
    <property type="project" value="UniProtKB-SubCell"/>
</dbReference>
<dbReference type="GO" id="GO:0051539">
    <property type="term" value="F:4 iron, 4 sulfur cluster binding"/>
    <property type="evidence" value="ECO:0007669"/>
    <property type="project" value="UniProtKB-UniRule"/>
</dbReference>
<dbReference type="GO" id="GO:0016992">
    <property type="term" value="F:lipoate synthase activity"/>
    <property type="evidence" value="ECO:0007669"/>
    <property type="project" value="UniProtKB-UniRule"/>
</dbReference>
<dbReference type="GO" id="GO:0046872">
    <property type="term" value="F:metal ion binding"/>
    <property type="evidence" value="ECO:0007669"/>
    <property type="project" value="UniProtKB-KW"/>
</dbReference>
<dbReference type="CDD" id="cd01335">
    <property type="entry name" value="Radical_SAM"/>
    <property type="match status" value="1"/>
</dbReference>
<dbReference type="FunFam" id="3.20.20.70:FF:000306">
    <property type="entry name" value="Lipoyl synthase, mitochondrial"/>
    <property type="match status" value="1"/>
</dbReference>
<dbReference type="Gene3D" id="3.20.20.70">
    <property type="entry name" value="Aldolase class I"/>
    <property type="match status" value="1"/>
</dbReference>
<dbReference type="HAMAP" id="MF_00206">
    <property type="entry name" value="Lipoyl_synth"/>
    <property type="match status" value="1"/>
</dbReference>
<dbReference type="InterPro" id="IPR013785">
    <property type="entry name" value="Aldolase_TIM"/>
</dbReference>
<dbReference type="InterPro" id="IPR006638">
    <property type="entry name" value="Elp3/MiaA/NifB-like_rSAM"/>
</dbReference>
<dbReference type="InterPro" id="IPR031691">
    <property type="entry name" value="LIAS_N"/>
</dbReference>
<dbReference type="InterPro" id="IPR003698">
    <property type="entry name" value="Lipoyl_synth"/>
</dbReference>
<dbReference type="InterPro" id="IPR007197">
    <property type="entry name" value="rSAM"/>
</dbReference>
<dbReference type="NCBIfam" id="TIGR00510">
    <property type="entry name" value="lipA"/>
    <property type="match status" value="1"/>
</dbReference>
<dbReference type="NCBIfam" id="NF004019">
    <property type="entry name" value="PRK05481.1"/>
    <property type="match status" value="1"/>
</dbReference>
<dbReference type="NCBIfam" id="NF009544">
    <property type="entry name" value="PRK12928.1"/>
    <property type="match status" value="1"/>
</dbReference>
<dbReference type="PANTHER" id="PTHR10949">
    <property type="entry name" value="LIPOYL SYNTHASE"/>
    <property type="match status" value="1"/>
</dbReference>
<dbReference type="PANTHER" id="PTHR10949:SF0">
    <property type="entry name" value="LIPOYL SYNTHASE, MITOCHONDRIAL"/>
    <property type="match status" value="1"/>
</dbReference>
<dbReference type="Pfam" id="PF16881">
    <property type="entry name" value="LIAS_N"/>
    <property type="match status" value="1"/>
</dbReference>
<dbReference type="Pfam" id="PF04055">
    <property type="entry name" value="Radical_SAM"/>
    <property type="match status" value="1"/>
</dbReference>
<dbReference type="PIRSF" id="PIRSF005963">
    <property type="entry name" value="Lipoyl_synth"/>
    <property type="match status" value="1"/>
</dbReference>
<dbReference type="SFLD" id="SFLDF00271">
    <property type="entry name" value="lipoyl_synthase"/>
    <property type="match status" value="1"/>
</dbReference>
<dbReference type="SFLD" id="SFLDS00029">
    <property type="entry name" value="Radical_SAM"/>
    <property type="match status" value="1"/>
</dbReference>
<dbReference type="SMART" id="SM00729">
    <property type="entry name" value="Elp3"/>
    <property type="match status" value="1"/>
</dbReference>
<dbReference type="SUPFAM" id="SSF102114">
    <property type="entry name" value="Radical SAM enzymes"/>
    <property type="match status" value="1"/>
</dbReference>
<dbReference type="PROSITE" id="PS51918">
    <property type="entry name" value="RADICAL_SAM"/>
    <property type="match status" value="1"/>
</dbReference>
<comment type="function">
    <text evidence="1">Catalyzes the radical-mediated insertion of two sulfur atoms into the C-6 and C-8 positions of the octanoyl moiety bound to the lipoyl domains of lipoate-dependent enzymes, thereby converting the octanoylated domains into lipoylated derivatives.</text>
</comment>
<comment type="catalytic activity">
    <reaction evidence="1">
        <text>[[Fe-S] cluster scaffold protein carrying a second [4Fe-4S](2+) cluster] + N(6)-octanoyl-L-lysyl-[protein] + 2 oxidized [2Fe-2S]-[ferredoxin] + 2 S-adenosyl-L-methionine + 4 H(+) = [[Fe-S] cluster scaffold protein] + N(6)-[(R)-dihydrolipoyl]-L-lysyl-[protein] + 4 Fe(3+) + 2 hydrogen sulfide + 2 5'-deoxyadenosine + 2 L-methionine + 2 reduced [2Fe-2S]-[ferredoxin]</text>
        <dbReference type="Rhea" id="RHEA:16585"/>
        <dbReference type="Rhea" id="RHEA-COMP:9928"/>
        <dbReference type="Rhea" id="RHEA-COMP:10000"/>
        <dbReference type="Rhea" id="RHEA-COMP:10001"/>
        <dbReference type="Rhea" id="RHEA-COMP:10475"/>
        <dbReference type="Rhea" id="RHEA-COMP:14568"/>
        <dbReference type="Rhea" id="RHEA-COMP:14569"/>
        <dbReference type="ChEBI" id="CHEBI:15378"/>
        <dbReference type="ChEBI" id="CHEBI:17319"/>
        <dbReference type="ChEBI" id="CHEBI:29034"/>
        <dbReference type="ChEBI" id="CHEBI:29919"/>
        <dbReference type="ChEBI" id="CHEBI:33722"/>
        <dbReference type="ChEBI" id="CHEBI:33737"/>
        <dbReference type="ChEBI" id="CHEBI:33738"/>
        <dbReference type="ChEBI" id="CHEBI:57844"/>
        <dbReference type="ChEBI" id="CHEBI:59789"/>
        <dbReference type="ChEBI" id="CHEBI:78809"/>
        <dbReference type="ChEBI" id="CHEBI:83100"/>
        <dbReference type="EC" id="2.8.1.8"/>
    </reaction>
</comment>
<comment type="cofactor">
    <cofactor evidence="1">
        <name>[4Fe-4S] cluster</name>
        <dbReference type="ChEBI" id="CHEBI:49883"/>
    </cofactor>
    <text evidence="1">Binds 2 [4Fe-4S] clusters per subunit. One cluster is coordinated with 3 cysteines and an exchangeable S-adenosyl-L-methionine.</text>
</comment>
<comment type="pathway">
    <text evidence="1">Protein modification; protein lipoylation via endogenous pathway; protein N(6)-(lipoyl)lysine from octanoyl-[acyl-carrier-protein]: step 2/2.</text>
</comment>
<comment type="subcellular location">
    <subcellularLocation>
        <location evidence="1">Cytoplasm</location>
    </subcellularLocation>
</comment>
<comment type="similarity">
    <text evidence="1">Belongs to the radical SAM superfamily. Lipoyl synthase family.</text>
</comment>
<reference key="1">
    <citation type="journal article" date="2008" name="Genomics">
        <title>Evolution in the laboratory: the genome of Halobacterium salinarum strain R1 compared to that of strain NRC-1.</title>
        <authorList>
            <person name="Pfeiffer F."/>
            <person name="Schuster S.C."/>
            <person name="Broicher A."/>
            <person name="Falb M."/>
            <person name="Palm P."/>
            <person name="Rodewald K."/>
            <person name="Ruepp A."/>
            <person name="Soppa J."/>
            <person name="Tittor J."/>
            <person name="Oesterhelt D."/>
        </authorList>
    </citation>
    <scope>NUCLEOTIDE SEQUENCE [LARGE SCALE GENOMIC DNA]</scope>
    <source>
        <strain>ATCC 29341 / DSM 671 / R1</strain>
    </source>
</reference>
<sequence>MSSRRKPEWLKMRPPSGERFTDIKETLRDNDLHTVCEEASCPNMGECWSGRDGPGTATFMLMGDRCSRGCNFCDVKTGGMEPLDPDEPANVAESVAEIGLDYVVLTSVDRDDLDDQGAGHFARTIREIKERDPSILVEVLIPDFQGEKSLVQKIIDAGPDVIAHNIETVARRQVPVRDRRAGYEQSLSVLEYVTRESDIYTKTSIMLGVGEYDHEVYQTLGDLREAGVDVVTLGQYLQPSRSHLDVADYVHPQKFETWQRVAESEFGFLYCASGPMVRSSYKAGELFVDAVLREGKSVQEARRNARRAASE</sequence>
<proteinExistence type="inferred from homology"/>
<protein>
    <recommendedName>
        <fullName evidence="1">Lipoyl synthase</fullName>
        <ecNumber evidence="1">2.8.1.8</ecNumber>
    </recommendedName>
    <alternativeName>
        <fullName evidence="1">Lip-syn</fullName>
        <shortName evidence="1">LS</shortName>
    </alternativeName>
    <alternativeName>
        <fullName evidence="1">Lipoate synthase</fullName>
    </alternativeName>
    <alternativeName>
        <fullName evidence="1">Lipoic acid synthase</fullName>
    </alternativeName>
    <alternativeName>
        <fullName evidence="1">Sulfur insertion protein LipA</fullName>
    </alternativeName>
</protein>
<accession>B0R7C4</accession>